<accession>Q2LQB0</accession>
<gene>
    <name evidence="1" type="primary">rplN</name>
    <name type="ordered locus">SYNAS_03120</name>
    <name type="ORF">SYN_03257</name>
</gene>
<reference key="1">
    <citation type="journal article" date="2007" name="Proc. Natl. Acad. Sci. U.S.A.">
        <title>The genome of Syntrophus aciditrophicus: life at the thermodynamic limit of microbial growth.</title>
        <authorList>
            <person name="McInerney M.J."/>
            <person name="Rohlin L."/>
            <person name="Mouttaki H."/>
            <person name="Kim U."/>
            <person name="Krupp R.S."/>
            <person name="Rios-Hernandez L."/>
            <person name="Sieber J."/>
            <person name="Struchtemeyer C.G."/>
            <person name="Bhattacharyya A."/>
            <person name="Campbell J.W."/>
            <person name="Gunsalus R.P."/>
        </authorList>
    </citation>
    <scope>NUCLEOTIDE SEQUENCE [LARGE SCALE GENOMIC DNA]</scope>
    <source>
        <strain>SB</strain>
    </source>
</reference>
<protein>
    <recommendedName>
        <fullName evidence="1">Large ribosomal subunit protein uL14</fullName>
    </recommendedName>
    <alternativeName>
        <fullName evidence="2">50S ribosomal protein L14</fullName>
    </alternativeName>
</protein>
<evidence type="ECO:0000255" key="1">
    <source>
        <dbReference type="HAMAP-Rule" id="MF_01367"/>
    </source>
</evidence>
<evidence type="ECO:0000305" key="2"/>
<comment type="function">
    <text evidence="1">Binds to 23S rRNA. Forms part of two intersubunit bridges in the 70S ribosome.</text>
</comment>
<comment type="subunit">
    <text evidence="1">Part of the 50S ribosomal subunit. Forms a cluster with proteins L3 and L19. In the 70S ribosome, L14 and L19 interact and together make contacts with the 16S rRNA in bridges B5 and B8.</text>
</comment>
<comment type="similarity">
    <text evidence="1">Belongs to the universal ribosomal protein uL14 family.</text>
</comment>
<comment type="sequence caution" evidence="2">
    <conflict type="erroneous initiation">
        <sequence resource="EMBL-CDS" id="ABC76191"/>
    </conflict>
</comment>
<feature type="chain" id="PRO_0000266573" description="Large ribosomal subunit protein uL14">
    <location>
        <begin position="1"/>
        <end position="122"/>
    </location>
</feature>
<keyword id="KW-1185">Reference proteome</keyword>
<keyword id="KW-0687">Ribonucleoprotein</keyword>
<keyword id="KW-0689">Ribosomal protein</keyword>
<keyword id="KW-0694">RNA-binding</keyword>
<keyword id="KW-0699">rRNA-binding</keyword>
<proteinExistence type="inferred from homology"/>
<sequence>MIQMQTVLNVADNSGAKKVACIKVLGGSKRRYAGVGDVIVVAVKEAMPNSKVKKGDVMKAVIVRTAKEVRRQDGSYLKFDDNSAVLISNQMEPIGTRIFGPVARELRARQFMKIISLAPEVL</sequence>
<name>RL14_SYNAS</name>
<organism>
    <name type="scientific">Syntrophus aciditrophicus (strain SB)</name>
    <dbReference type="NCBI Taxonomy" id="56780"/>
    <lineage>
        <taxon>Bacteria</taxon>
        <taxon>Pseudomonadati</taxon>
        <taxon>Thermodesulfobacteriota</taxon>
        <taxon>Syntrophia</taxon>
        <taxon>Syntrophales</taxon>
        <taxon>Syntrophaceae</taxon>
        <taxon>Syntrophus</taxon>
    </lineage>
</organism>
<dbReference type="EMBL" id="CP000252">
    <property type="protein sequence ID" value="ABC76191.1"/>
    <property type="status" value="ALT_INIT"/>
    <property type="molecule type" value="Genomic_DNA"/>
</dbReference>
<dbReference type="RefSeq" id="WP_041584592.1">
    <property type="nucleotide sequence ID" value="NC_007759.1"/>
</dbReference>
<dbReference type="SMR" id="Q2LQB0"/>
<dbReference type="FunCoup" id="Q2LQB0">
    <property type="interactions" value="540"/>
</dbReference>
<dbReference type="STRING" id="56780.SYN_03257"/>
<dbReference type="KEGG" id="sat:SYN_03257"/>
<dbReference type="eggNOG" id="COG0093">
    <property type="taxonomic scope" value="Bacteria"/>
</dbReference>
<dbReference type="HOGENOM" id="CLU_095071_2_1_7"/>
<dbReference type="InParanoid" id="Q2LQB0"/>
<dbReference type="OrthoDB" id="9806379at2"/>
<dbReference type="Proteomes" id="UP000001933">
    <property type="component" value="Chromosome"/>
</dbReference>
<dbReference type="GO" id="GO:0022625">
    <property type="term" value="C:cytosolic large ribosomal subunit"/>
    <property type="evidence" value="ECO:0007669"/>
    <property type="project" value="TreeGrafter"/>
</dbReference>
<dbReference type="GO" id="GO:0070180">
    <property type="term" value="F:large ribosomal subunit rRNA binding"/>
    <property type="evidence" value="ECO:0007669"/>
    <property type="project" value="TreeGrafter"/>
</dbReference>
<dbReference type="GO" id="GO:0003735">
    <property type="term" value="F:structural constituent of ribosome"/>
    <property type="evidence" value="ECO:0007669"/>
    <property type="project" value="InterPro"/>
</dbReference>
<dbReference type="GO" id="GO:0006412">
    <property type="term" value="P:translation"/>
    <property type="evidence" value="ECO:0007669"/>
    <property type="project" value="UniProtKB-UniRule"/>
</dbReference>
<dbReference type="CDD" id="cd00337">
    <property type="entry name" value="Ribosomal_uL14"/>
    <property type="match status" value="1"/>
</dbReference>
<dbReference type="FunFam" id="2.40.150.20:FF:000001">
    <property type="entry name" value="50S ribosomal protein L14"/>
    <property type="match status" value="1"/>
</dbReference>
<dbReference type="Gene3D" id="2.40.150.20">
    <property type="entry name" value="Ribosomal protein L14"/>
    <property type="match status" value="1"/>
</dbReference>
<dbReference type="HAMAP" id="MF_01367">
    <property type="entry name" value="Ribosomal_uL14"/>
    <property type="match status" value="1"/>
</dbReference>
<dbReference type="InterPro" id="IPR000218">
    <property type="entry name" value="Ribosomal_uL14"/>
</dbReference>
<dbReference type="InterPro" id="IPR005745">
    <property type="entry name" value="Ribosomal_uL14_bac-type"/>
</dbReference>
<dbReference type="InterPro" id="IPR019972">
    <property type="entry name" value="Ribosomal_uL14_CS"/>
</dbReference>
<dbReference type="InterPro" id="IPR036853">
    <property type="entry name" value="Ribosomal_uL14_sf"/>
</dbReference>
<dbReference type="NCBIfam" id="TIGR01067">
    <property type="entry name" value="rplN_bact"/>
    <property type="match status" value="1"/>
</dbReference>
<dbReference type="PANTHER" id="PTHR11761">
    <property type="entry name" value="50S/60S RIBOSOMAL PROTEIN L14/L23"/>
    <property type="match status" value="1"/>
</dbReference>
<dbReference type="PANTHER" id="PTHR11761:SF3">
    <property type="entry name" value="LARGE RIBOSOMAL SUBUNIT PROTEIN UL14M"/>
    <property type="match status" value="1"/>
</dbReference>
<dbReference type="Pfam" id="PF00238">
    <property type="entry name" value="Ribosomal_L14"/>
    <property type="match status" value="1"/>
</dbReference>
<dbReference type="SMART" id="SM01374">
    <property type="entry name" value="Ribosomal_L14"/>
    <property type="match status" value="1"/>
</dbReference>
<dbReference type="SUPFAM" id="SSF50193">
    <property type="entry name" value="Ribosomal protein L14"/>
    <property type="match status" value="1"/>
</dbReference>
<dbReference type="PROSITE" id="PS00049">
    <property type="entry name" value="RIBOSOMAL_L14"/>
    <property type="match status" value="1"/>
</dbReference>